<evidence type="ECO:0000250" key="1">
    <source>
        <dbReference type="UniProtKB" id="P0AG80"/>
    </source>
</evidence>
<evidence type="ECO:0000255" key="2"/>
<evidence type="ECO:0000305" key="3"/>
<accession>Q83PU5</accession>
<accession>Q7BYU3</accession>
<protein>
    <recommendedName>
        <fullName evidence="1">sn-glycerol-3-phosphate-binding periplasmic protein UgpB</fullName>
    </recommendedName>
</protein>
<proteinExistence type="inferred from homology"/>
<keyword id="KW-0574">Periplasm</keyword>
<keyword id="KW-1185">Reference proteome</keyword>
<keyword id="KW-0732">Signal</keyword>
<keyword id="KW-0813">Transport</keyword>
<organism>
    <name type="scientific">Shigella flexneri</name>
    <dbReference type="NCBI Taxonomy" id="623"/>
    <lineage>
        <taxon>Bacteria</taxon>
        <taxon>Pseudomonadati</taxon>
        <taxon>Pseudomonadota</taxon>
        <taxon>Gammaproteobacteria</taxon>
        <taxon>Enterobacterales</taxon>
        <taxon>Enterobacteriaceae</taxon>
        <taxon>Shigella</taxon>
    </lineage>
</organism>
<dbReference type="EMBL" id="AE005674">
    <property type="protein sequence ID" value="AAN44930.1"/>
    <property type="molecule type" value="Genomic_DNA"/>
</dbReference>
<dbReference type="EMBL" id="AE014073">
    <property type="protein sequence ID" value="AAP19252.1"/>
    <property type="molecule type" value="Genomic_DNA"/>
</dbReference>
<dbReference type="RefSeq" id="NP_709223.1">
    <property type="nucleotide sequence ID" value="NC_004337.2"/>
</dbReference>
<dbReference type="RefSeq" id="WP_000803215.1">
    <property type="nucleotide sequence ID" value="NZ_WPGW01000010.1"/>
</dbReference>
<dbReference type="SMR" id="Q83PU5"/>
<dbReference type="STRING" id="198214.SF3471"/>
<dbReference type="PaxDb" id="198214-SF3471"/>
<dbReference type="GeneID" id="1026451"/>
<dbReference type="KEGG" id="sfl:SF3471"/>
<dbReference type="KEGG" id="sfx:S4292"/>
<dbReference type="PATRIC" id="fig|198214.7.peg.4091"/>
<dbReference type="HOGENOM" id="CLU_031285_3_0_6"/>
<dbReference type="Proteomes" id="UP000001006">
    <property type="component" value="Chromosome"/>
</dbReference>
<dbReference type="Proteomes" id="UP000002673">
    <property type="component" value="Chromosome"/>
</dbReference>
<dbReference type="GO" id="GO:0030288">
    <property type="term" value="C:outer membrane-bounded periplasmic space"/>
    <property type="evidence" value="ECO:0007669"/>
    <property type="project" value="UniProtKB-ARBA"/>
</dbReference>
<dbReference type="GO" id="GO:0055085">
    <property type="term" value="P:transmembrane transport"/>
    <property type="evidence" value="ECO:0007669"/>
    <property type="project" value="InterPro"/>
</dbReference>
<dbReference type="CDD" id="cd14748">
    <property type="entry name" value="PBP2_UgpB"/>
    <property type="match status" value="1"/>
</dbReference>
<dbReference type="Gene3D" id="3.40.190.10">
    <property type="entry name" value="Periplasmic binding protein-like II"/>
    <property type="match status" value="2"/>
</dbReference>
<dbReference type="InterPro" id="IPR050490">
    <property type="entry name" value="Bact_solute-bd_prot1"/>
</dbReference>
<dbReference type="InterPro" id="IPR006059">
    <property type="entry name" value="SBP"/>
</dbReference>
<dbReference type="InterPro" id="IPR006061">
    <property type="entry name" value="SBP_1_CS"/>
</dbReference>
<dbReference type="NCBIfam" id="NF008211">
    <property type="entry name" value="PRK10974.1"/>
    <property type="match status" value="1"/>
</dbReference>
<dbReference type="PANTHER" id="PTHR43649">
    <property type="entry name" value="ARABINOSE-BINDING PROTEIN-RELATED"/>
    <property type="match status" value="1"/>
</dbReference>
<dbReference type="PANTHER" id="PTHR43649:SF31">
    <property type="entry name" value="SN-GLYCEROL-3-PHOSPHATE-BINDING PERIPLASMIC PROTEIN UGPB"/>
    <property type="match status" value="1"/>
</dbReference>
<dbReference type="Pfam" id="PF13416">
    <property type="entry name" value="SBP_bac_8"/>
    <property type="match status" value="1"/>
</dbReference>
<dbReference type="SUPFAM" id="SSF53850">
    <property type="entry name" value="Periplasmic binding protein-like II"/>
    <property type="match status" value="1"/>
</dbReference>
<dbReference type="PROSITE" id="PS01037">
    <property type="entry name" value="SBP_BACTERIAL_1"/>
    <property type="match status" value="1"/>
</dbReference>
<gene>
    <name type="primary">ugpB</name>
    <name type="ordered locus">SF3471</name>
    <name type="ordered locus">S4292</name>
</gene>
<name>UGPB_SHIFL</name>
<feature type="signal peptide" evidence="2">
    <location>
        <begin position="1"/>
        <end position="23"/>
    </location>
</feature>
<feature type="chain" id="PRO_0000292819" description="sn-glycerol-3-phosphate-binding periplasmic protein UgpB">
    <location>
        <begin position="24"/>
        <end position="438"/>
    </location>
</feature>
<feature type="binding site" evidence="1">
    <location>
        <position position="65"/>
    </location>
    <ligand>
        <name>sn-glycerol 3-phosphate</name>
        <dbReference type="ChEBI" id="CHEBI:57597"/>
    </ligand>
</feature>
<feature type="binding site" evidence="1">
    <location>
        <position position="89"/>
    </location>
    <ligand>
        <name>sn-glycerol 3-phosphate</name>
        <dbReference type="ChEBI" id="CHEBI:57597"/>
    </ligand>
</feature>
<feature type="binding site" evidence="1">
    <location>
        <position position="144"/>
    </location>
    <ligand>
        <name>sn-glycerol 3-phosphate</name>
        <dbReference type="ChEBI" id="CHEBI:57597"/>
    </ligand>
</feature>
<feature type="binding site" evidence="1">
    <location>
        <position position="270"/>
    </location>
    <ligand>
        <name>sn-glycerol 3-phosphate</name>
        <dbReference type="ChEBI" id="CHEBI:57597"/>
    </ligand>
</feature>
<feature type="binding site" evidence="1">
    <location>
        <position position="307"/>
    </location>
    <ligand>
        <name>sn-glycerol 3-phosphate</name>
        <dbReference type="ChEBI" id="CHEBI:57597"/>
    </ligand>
</feature>
<feature type="binding site" evidence="1">
    <location>
        <position position="346"/>
    </location>
    <ligand>
        <name>sn-glycerol 3-phosphate</name>
        <dbReference type="ChEBI" id="CHEBI:57597"/>
    </ligand>
</feature>
<feature type="binding site" evidence="1">
    <location>
        <position position="397"/>
    </location>
    <ligand>
        <name>sn-glycerol 3-phosphate</name>
        <dbReference type="ChEBI" id="CHEBI:57597"/>
    </ligand>
</feature>
<sequence>MKPLHYTASALALGLALMGNAQAVTTIPFWHSMEGELGKEVDSLAQRFNAENPDYKIVPTYKGNYEQNLSAGIAVFRTGNAPAILQVYEVGTATMMASKAIKPVYDVFKEAGIQFDESQFVPTVSGYYSDSKTGHLLSQPFNSSTSVLYYNKDAFKKAGLDPEQPPKTWQDLADYSAKLKASGIKCGYASGWQGWIQLENFSAWNGLPFASKNNGFDGTDAVLEFNKPEQVKHIAMLEEMNKKGDFSYVGRKDESTEKFYNGDCAMTTASSGSLANIREYAKFNYGVGMMPYDADAKDAPQNAIIGGASLWVMQGKDKETYTGVAKFLDFLAKPENAAEWHQKTGYLPITKAAYDLTREQGFYEKNPGADTATRQMLNKPPLPFTKGLRLGNMPQIRVIVDEELESVWTGKKTPQQALDTAVERGNQLLRRFEKSTKS</sequence>
<comment type="function">
    <text evidence="1">Part of the ABC transporter complex UgpBAEC involved in sn-glycerol-3-phosphate (G3P) import. Binds G3P.</text>
</comment>
<comment type="subunit">
    <text evidence="1">The complex is composed of two ATP-binding proteins (UgpC), two transmembrane proteins (UgpA and UgpE) and a solute-binding protein (UgpB).</text>
</comment>
<comment type="subcellular location">
    <subcellularLocation>
        <location evidence="1">Periplasm</location>
    </subcellularLocation>
</comment>
<comment type="similarity">
    <text evidence="3">Belongs to the bacterial solute-binding protein 1 family.</text>
</comment>
<reference key="1">
    <citation type="journal article" date="2002" name="Nucleic Acids Res.">
        <title>Genome sequence of Shigella flexneri 2a: insights into pathogenicity through comparison with genomes of Escherichia coli K12 and O157.</title>
        <authorList>
            <person name="Jin Q."/>
            <person name="Yuan Z."/>
            <person name="Xu J."/>
            <person name="Wang Y."/>
            <person name="Shen Y."/>
            <person name="Lu W."/>
            <person name="Wang J."/>
            <person name="Liu H."/>
            <person name="Yang J."/>
            <person name="Yang F."/>
            <person name="Zhang X."/>
            <person name="Zhang J."/>
            <person name="Yang G."/>
            <person name="Wu H."/>
            <person name="Qu D."/>
            <person name="Dong J."/>
            <person name="Sun L."/>
            <person name="Xue Y."/>
            <person name="Zhao A."/>
            <person name="Gao Y."/>
            <person name="Zhu J."/>
            <person name="Kan B."/>
            <person name="Ding K."/>
            <person name="Chen S."/>
            <person name="Cheng H."/>
            <person name="Yao Z."/>
            <person name="He B."/>
            <person name="Chen R."/>
            <person name="Ma D."/>
            <person name="Qiang B."/>
            <person name="Wen Y."/>
            <person name="Hou Y."/>
            <person name="Yu J."/>
        </authorList>
    </citation>
    <scope>NUCLEOTIDE SEQUENCE [LARGE SCALE GENOMIC DNA]</scope>
    <source>
        <strain>301 / Serotype 2a</strain>
    </source>
</reference>
<reference key="2">
    <citation type="journal article" date="2003" name="Infect. Immun.">
        <title>Complete genome sequence and comparative genomics of Shigella flexneri serotype 2a strain 2457T.</title>
        <authorList>
            <person name="Wei J."/>
            <person name="Goldberg M.B."/>
            <person name="Burland V."/>
            <person name="Venkatesan M.M."/>
            <person name="Deng W."/>
            <person name="Fournier G."/>
            <person name="Mayhew G.F."/>
            <person name="Plunkett G. III"/>
            <person name="Rose D.J."/>
            <person name="Darling A."/>
            <person name="Mau B."/>
            <person name="Perna N.T."/>
            <person name="Payne S.M."/>
            <person name="Runyen-Janecky L.J."/>
            <person name="Zhou S."/>
            <person name="Schwartz D.C."/>
            <person name="Blattner F.R."/>
        </authorList>
    </citation>
    <scope>NUCLEOTIDE SEQUENCE [LARGE SCALE GENOMIC DNA]</scope>
    <source>
        <strain>ATCC 700930 / 2457T / Serotype 2a</strain>
    </source>
</reference>